<gene>
    <name type="primary">HBA</name>
</gene>
<keyword id="KW-0903">Direct protein sequencing</keyword>
<keyword id="KW-0349">Heme</keyword>
<keyword id="KW-0408">Iron</keyword>
<keyword id="KW-0479">Metal-binding</keyword>
<keyword id="KW-0561">Oxygen transport</keyword>
<keyword id="KW-0813">Transport</keyword>
<dbReference type="PIR" id="A02343">
    <property type="entry name" value="HANE"/>
</dbReference>
<dbReference type="SMR" id="P02014"/>
<dbReference type="GO" id="GO:0072562">
    <property type="term" value="C:blood microparticle"/>
    <property type="evidence" value="ECO:0007669"/>
    <property type="project" value="TreeGrafter"/>
</dbReference>
<dbReference type="GO" id="GO:0031838">
    <property type="term" value="C:haptoglobin-hemoglobin complex"/>
    <property type="evidence" value="ECO:0007669"/>
    <property type="project" value="TreeGrafter"/>
</dbReference>
<dbReference type="GO" id="GO:0005833">
    <property type="term" value="C:hemoglobin complex"/>
    <property type="evidence" value="ECO:0007669"/>
    <property type="project" value="InterPro"/>
</dbReference>
<dbReference type="GO" id="GO:0031720">
    <property type="term" value="F:haptoglobin binding"/>
    <property type="evidence" value="ECO:0007669"/>
    <property type="project" value="TreeGrafter"/>
</dbReference>
<dbReference type="GO" id="GO:0020037">
    <property type="term" value="F:heme binding"/>
    <property type="evidence" value="ECO:0007669"/>
    <property type="project" value="InterPro"/>
</dbReference>
<dbReference type="GO" id="GO:0046872">
    <property type="term" value="F:metal ion binding"/>
    <property type="evidence" value="ECO:0007669"/>
    <property type="project" value="UniProtKB-KW"/>
</dbReference>
<dbReference type="GO" id="GO:0043177">
    <property type="term" value="F:organic acid binding"/>
    <property type="evidence" value="ECO:0007669"/>
    <property type="project" value="TreeGrafter"/>
</dbReference>
<dbReference type="GO" id="GO:0019825">
    <property type="term" value="F:oxygen binding"/>
    <property type="evidence" value="ECO:0007669"/>
    <property type="project" value="InterPro"/>
</dbReference>
<dbReference type="GO" id="GO:0005344">
    <property type="term" value="F:oxygen carrier activity"/>
    <property type="evidence" value="ECO:0007669"/>
    <property type="project" value="UniProtKB-KW"/>
</dbReference>
<dbReference type="GO" id="GO:0004601">
    <property type="term" value="F:peroxidase activity"/>
    <property type="evidence" value="ECO:0007669"/>
    <property type="project" value="TreeGrafter"/>
</dbReference>
<dbReference type="GO" id="GO:0042744">
    <property type="term" value="P:hydrogen peroxide catabolic process"/>
    <property type="evidence" value="ECO:0007669"/>
    <property type="project" value="TreeGrafter"/>
</dbReference>
<dbReference type="CDD" id="cd08927">
    <property type="entry name" value="Hb-alpha-like"/>
    <property type="match status" value="1"/>
</dbReference>
<dbReference type="FunFam" id="1.10.490.10:FF:000002">
    <property type="entry name" value="Hemoglobin subunit alpha"/>
    <property type="match status" value="1"/>
</dbReference>
<dbReference type="Gene3D" id="1.10.490.10">
    <property type="entry name" value="Globins"/>
    <property type="match status" value="1"/>
</dbReference>
<dbReference type="InterPro" id="IPR000971">
    <property type="entry name" value="Globin"/>
</dbReference>
<dbReference type="InterPro" id="IPR009050">
    <property type="entry name" value="Globin-like_sf"/>
</dbReference>
<dbReference type="InterPro" id="IPR012292">
    <property type="entry name" value="Globin/Proto"/>
</dbReference>
<dbReference type="InterPro" id="IPR002338">
    <property type="entry name" value="Hemoglobin_a-typ"/>
</dbReference>
<dbReference type="InterPro" id="IPR050056">
    <property type="entry name" value="Hemoglobin_oxygen_transport"/>
</dbReference>
<dbReference type="PANTHER" id="PTHR11442">
    <property type="entry name" value="HEMOGLOBIN FAMILY MEMBER"/>
    <property type="match status" value="1"/>
</dbReference>
<dbReference type="PANTHER" id="PTHR11442:SF48">
    <property type="entry name" value="HEMOGLOBIN SUBUNIT ALPHA"/>
    <property type="match status" value="1"/>
</dbReference>
<dbReference type="Pfam" id="PF00042">
    <property type="entry name" value="Globin"/>
    <property type="match status" value="1"/>
</dbReference>
<dbReference type="PRINTS" id="PR00612">
    <property type="entry name" value="ALPHAHAEM"/>
</dbReference>
<dbReference type="SUPFAM" id="SSF46458">
    <property type="entry name" value="Globin-like"/>
    <property type="match status" value="1"/>
</dbReference>
<dbReference type="PROSITE" id="PS01033">
    <property type="entry name" value="GLOBIN"/>
    <property type="match status" value="1"/>
</dbReference>
<sequence>MKLSAEDKHNVKTTWDHIKGHEEALGAEALFRMFTSLPATRTYFPAKDLSEGSSFLHSHGKKVMGALSNAVAHIDDIDAALCKLSDKHAQDLMVDPANFPKLAHNILVVMGIHLKAHLTYPVHCSVDKFLDVVGHVLTSKYR</sequence>
<feature type="chain" id="PRO_0000052780" description="Hemoglobin subunit alpha">
    <location>
        <begin position="1"/>
        <end position="142"/>
    </location>
</feature>
<feature type="domain" description="Globin" evidence="1">
    <location>
        <begin position="2"/>
        <end position="142"/>
    </location>
</feature>
<feature type="binding site" evidence="1">
    <location>
        <position position="59"/>
    </location>
    <ligand>
        <name>O2</name>
        <dbReference type="ChEBI" id="CHEBI:15379"/>
    </ligand>
</feature>
<feature type="binding site" description="proximal binding residue" evidence="1">
    <location>
        <position position="88"/>
    </location>
    <ligand>
        <name>heme b</name>
        <dbReference type="ChEBI" id="CHEBI:60344"/>
    </ligand>
    <ligandPart>
        <name>Fe</name>
        <dbReference type="ChEBI" id="CHEBI:18248"/>
    </ligandPart>
</feature>
<protein>
    <recommendedName>
        <fullName>Hemoglobin subunit alpha</fullName>
    </recommendedName>
    <alternativeName>
        <fullName>Alpha-globin</fullName>
    </alternativeName>
    <alternativeName>
        <fullName>Hemoglobin alpha chain</fullName>
    </alternativeName>
</protein>
<name>HBA_TARGR</name>
<evidence type="ECO:0000255" key="1">
    <source>
        <dbReference type="PROSITE-ProRule" id="PRU00238"/>
    </source>
</evidence>
<comment type="function">
    <text>Involved in oxygen transport from the lung to the various peripheral tissues.</text>
</comment>
<comment type="subunit">
    <text>Heterotetramer of two alpha chains and two beta chains.</text>
</comment>
<comment type="tissue specificity">
    <text>Red blood cells.</text>
</comment>
<comment type="similarity">
    <text evidence="1">Belongs to the globin family.</text>
</comment>
<organism>
    <name type="scientific">Taricha granulosa</name>
    <name type="common">Roughskin newt</name>
    <dbReference type="NCBI Taxonomy" id="8321"/>
    <lineage>
        <taxon>Eukaryota</taxon>
        <taxon>Metazoa</taxon>
        <taxon>Chordata</taxon>
        <taxon>Craniata</taxon>
        <taxon>Vertebrata</taxon>
        <taxon>Euteleostomi</taxon>
        <taxon>Amphibia</taxon>
        <taxon>Batrachia</taxon>
        <taxon>Caudata</taxon>
        <taxon>Salamandroidea</taxon>
        <taxon>Salamandridae</taxon>
        <taxon>Pleurodelinae</taxon>
        <taxon>Taricha</taxon>
    </lineage>
</organism>
<proteinExistence type="evidence at protein level"/>
<reference key="1">
    <citation type="journal article" date="1977" name="Aust. J. Biol. Sci.">
        <title>Alpha-chain sequence of newt haemoglobin (Taricha granulosa).</title>
        <authorList>
            <person name="Coates M."/>
            <person name="Brimhall B."/>
            <person name="Stenzel P."/>
            <person name="Hermodson M."/>
            <person name="Gibson D."/>
            <person name="Jones R.T."/>
            <person name="Vedvick T."/>
        </authorList>
    </citation>
    <scope>PROTEIN SEQUENCE</scope>
</reference>
<accession>P02014</accession>